<sequence>MDKERILTPAVVFSVALLHLAMVALLWQAHKLPVIESGNVIEFVDLGDFGGGDGAPEGAGAPAAPEPQPVPEPPKPVEPPKPVLKPVVTKKADADIQQPKEEPKPEEKPKPEEKPKPEPKPEAKPVPKPAEKPVEKPSEKPAEHPGNASAKADSEQGNGEDKGTGIKGDGTGRGEGSGKGSGGVKGEHGEGAGSSKGNPLRANGSIPRPAYPTLSMENDEQGTVVLSVLVSPGGHVESVKIVKSSGFSRLDNAARKAAQNGHFQANAWTEFKVPVKFELN</sequence>
<reference key="1">
    <citation type="journal article" date="2000" name="Nature">
        <title>Complete DNA sequence of a serogroup A strain of Neisseria meningitidis Z2491.</title>
        <authorList>
            <person name="Parkhill J."/>
            <person name="Achtman M."/>
            <person name="James K.D."/>
            <person name="Bentley S.D."/>
            <person name="Churcher C.M."/>
            <person name="Klee S.R."/>
            <person name="Morelli G."/>
            <person name="Basham D."/>
            <person name="Brown D."/>
            <person name="Chillingworth T."/>
            <person name="Davies R.M."/>
            <person name="Davis P."/>
            <person name="Devlin K."/>
            <person name="Feltwell T."/>
            <person name="Hamlin N."/>
            <person name="Holroyd S."/>
            <person name="Jagels K."/>
            <person name="Leather S."/>
            <person name="Moule S."/>
            <person name="Mungall K.L."/>
            <person name="Quail M.A."/>
            <person name="Rajandream M.A."/>
            <person name="Rutherford K.M."/>
            <person name="Simmonds M."/>
            <person name="Skelton J."/>
            <person name="Whitehead S."/>
            <person name="Spratt B.G."/>
            <person name="Barrell B.G."/>
        </authorList>
    </citation>
    <scope>NUCLEOTIDE SEQUENCE [LARGE SCALE GENOMIC DNA]</scope>
    <source>
        <strain>DSM 15465 / Z2491</strain>
    </source>
</reference>
<organism>
    <name type="scientific">Neisseria meningitidis serogroup A / serotype 4A (strain DSM 15465 / Z2491)</name>
    <dbReference type="NCBI Taxonomy" id="122587"/>
    <lineage>
        <taxon>Bacteria</taxon>
        <taxon>Pseudomonadati</taxon>
        <taxon>Pseudomonadota</taxon>
        <taxon>Betaproteobacteria</taxon>
        <taxon>Neisseriales</taxon>
        <taxon>Neisseriaceae</taxon>
        <taxon>Neisseria</taxon>
    </lineage>
</organism>
<keyword id="KW-0997">Cell inner membrane</keyword>
<keyword id="KW-1003">Cell membrane</keyword>
<keyword id="KW-0472">Membrane</keyword>
<keyword id="KW-0653">Protein transport</keyword>
<keyword id="KW-0735">Signal-anchor</keyword>
<keyword id="KW-0812">Transmembrane</keyword>
<keyword id="KW-1133">Transmembrane helix</keyword>
<keyword id="KW-0813">Transport</keyword>
<keyword id="KW-0843">Virulence</keyword>
<proteinExistence type="inferred from homology"/>
<name>TONB_NEIMA</name>
<feature type="chain" id="PRO_0000196202" description="Protein TonB">
    <location>
        <begin position="1"/>
        <end position="280"/>
    </location>
</feature>
<feature type="topological domain" description="Cytoplasmic" evidence="2">
    <location>
        <begin position="1"/>
        <end position="5"/>
    </location>
</feature>
<feature type="transmembrane region" description="Helical; Signal-anchor" evidence="2">
    <location>
        <begin position="6"/>
        <end position="27"/>
    </location>
</feature>
<feature type="topological domain" description="Periplasmic" evidence="2">
    <location>
        <begin position="28"/>
        <end position="280"/>
    </location>
</feature>
<feature type="domain" description="TonB C-terminal" evidence="3">
    <location>
        <begin position="196"/>
        <end position="280"/>
    </location>
</feature>
<feature type="region of interest" description="Disordered" evidence="4">
    <location>
        <begin position="51"/>
        <end position="217"/>
    </location>
</feature>
<feature type="compositionally biased region" description="Pro residues" evidence="4">
    <location>
        <begin position="64"/>
        <end position="83"/>
    </location>
</feature>
<feature type="compositionally biased region" description="Basic and acidic residues" evidence="4">
    <location>
        <begin position="90"/>
        <end position="143"/>
    </location>
</feature>
<feature type="compositionally biased region" description="Gly residues" evidence="4">
    <location>
        <begin position="165"/>
        <end position="184"/>
    </location>
</feature>
<dbReference type="EMBL" id="AL157959">
    <property type="protein sequence ID" value="CAM09094.1"/>
    <property type="molecule type" value="Genomic_DNA"/>
</dbReference>
<dbReference type="PIR" id="F81827">
    <property type="entry name" value="F81827"/>
</dbReference>
<dbReference type="RefSeq" id="WP_002236738.1">
    <property type="nucleotide sequence ID" value="NC_003116.1"/>
</dbReference>
<dbReference type="SMR" id="P57003"/>
<dbReference type="EnsemblBacteria" id="CAM09094">
    <property type="protein sequence ID" value="CAM09094"/>
    <property type="gene ID" value="NMA1985"/>
</dbReference>
<dbReference type="KEGG" id="nma:NMA1985"/>
<dbReference type="HOGENOM" id="CLU_899630_0_0_4"/>
<dbReference type="Proteomes" id="UP000000626">
    <property type="component" value="Chromosome"/>
</dbReference>
<dbReference type="GO" id="GO:0030288">
    <property type="term" value="C:outer membrane-bounded periplasmic space"/>
    <property type="evidence" value="ECO:0007669"/>
    <property type="project" value="InterPro"/>
</dbReference>
<dbReference type="GO" id="GO:0098797">
    <property type="term" value="C:plasma membrane protein complex"/>
    <property type="evidence" value="ECO:0007669"/>
    <property type="project" value="TreeGrafter"/>
</dbReference>
<dbReference type="GO" id="GO:0031992">
    <property type="term" value="F:energy transducer activity"/>
    <property type="evidence" value="ECO:0007669"/>
    <property type="project" value="InterPro"/>
</dbReference>
<dbReference type="GO" id="GO:0015031">
    <property type="term" value="P:protein transport"/>
    <property type="evidence" value="ECO:0007669"/>
    <property type="project" value="UniProtKB-KW"/>
</dbReference>
<dbReference type="GO" id="GO:0015891">
    <property type="term" value="P:siderophore transport"/>
    <property type="evidence" value="ECO:0007669"/>
    <property type="project" value="InterPro"/>
</dbReference>
<dbReference type="GO" id="GO:0055085">
    <property type="term" value="P:transmembrane transport"/>
    <property type="evidence" value="ECO:0007669"/>
    <property type="project" value="InterPro"/>
</dbReference>
<dbReference type="FunFam" id="3.30.1150.10:FF:000009">
    <property type="entry name" value="Protein TonB"/>
    <property type="match status" value="1"/>
</dbReference>
<dbReference type="Gene3D" id="3.30.1150.10">
    <property type="match status" value="1"/>
</dbReference>
<dbReference type="InterPro" id="IPR003538">
    <property type="entry name" value="TonB"/>
</dbReference>
<dbReference type="InterPro" id="IPR051045">
    <property type="entry name" value="TonB-dependent_transducer"/>
</dbReference>
<dbReference type="InterPro" id="IPR006260">
    <property type="entry name" value="TonB/TolA_C"/>
</dbReference>
<dbReference type="InterPro" id="IPR037682">
    <property type="entry name" value="TonB_C"/>
</dbReference>
<dbReference type="NCBIfam" id="TIGR01352">
    <property type="entry name" value="tonB_Cterm"/>
    <property type="match status" value="1"/>
</dbReference>
<dbReference type="PANTHER" id="PTHR33446:SF2">
    <property type="entry name" value="PROTEIN TONB"/>
    <property type="match status" value="1"/>
</dbReference>
<dbReference type="PANTHER" id="PTHR33446">
    <property type="entry name" value="PROTEIN TONB-RELATED"/>
    <property type="match status" value="1"/>
</dbReference>
<dbReference type="Pfam" id="PF03544">
    <property type="entry name" value="TonB_C"/>
    <property type="match status" value="1"/>
</dbReference>
<dbReference type="PRINTS" id="PR01374">
    <property type="entry name" value="TONBPROTEIN"/>
</dbReference>
<dbReference type="SUPFAM" id="SSF74653">
    <property type="entry name" value="TolA/TonB C-terminal domain"/>
    <property type="match status" value="1"/>
</dbReference>
<dbReference type="PROSITE" id="PS52015">
    <property type="entry name" value="TONB_CTD"/>
    <property type="match status" value="1"/>
</dbReference>
<accession>P57003</accession>
<accession>A1ITH9</accession>
<protein>
    <recommendedName>
        <fullName>Protein TonB</fullName>
    </recommendedName>
</protein>
<gene>
    <name type="primary">tonB</name>
    <name type="ordered locus">NMA1985</name>
</gene>
<evidence type="ECO:0000250" key="1"/>
<evidence type="ECO:0000255" key="2"/>
<evidence type="ECO:0000255" key="3">
    <source>
        <dbReference type="PROSITE-ProRule" id="PRU01359"/>
    </source>
</evidence>
<evidence type="ECO:0000256" key="4">
    <source>
        <dbReference type="SAM" id="MobiDB-lite"/>
    </source>
</evidence>
<evidence type="ECO:0000305" key="5"/>
<comment type="function">
    <text>Interacts with outer membrane receptor proteins that carry out high-affinity binding and energy dependent uptake into the periplasmic space of specific substrates. It could act to transduce energy from the cytoplasmic membrane to specific energy-requiring processes in the outer membrane, resulting in the release into the periplasm of ligands bound by these outer membrane proteins. Required for heme utilization and virulence.</text>
</comment>
<comment type="subunit">
    <text evidence="1">The accessory proteins ExbB and ExbD seem to form a complex with TonB.</text>
</comment>
<comment type="subcellular location">
    <subcellularLocation>
        <location evidence="1">Cell inner membrane</location>
        <topology evidence="1">Single-pass membrane protein</topology>
        <orientation evidence="1">Periplasmic side</orientation>
    </subcellularLocation>
</comment>
<comment type="similarity">
    <text evidence="5">Belongs to the TonB family.</text>
</comment>